<gene>
    <name type="primary">fbiC</name>
    <name type="ordered locus">NFA_47520</name>
</gene>
<protein>
    <recommendedName>
        <fullName>FO synthase</fullName>
    </recommendedName>
    <domain>
        <recommendedName>
            <fullName>7,8-didemethyl-8-hydroxy-5-deazariboflavin synthase</fullName>
            <ecNumber>4.3.1.32</ecNumber>
        </recommendedName>
    </domain>
    <domain>
        <recommendedName>
            <fullName>5-amino-6-(D-ribitylamino)uracil--L-tyrosine 4-hydroxyphenyl transferase</fullName>
            <ecNumber>2.5.1.147</ecNumber>
        </recommendedName>
    </domain>
</protein>
<dbReference type="EC" id="4.3.1.32"/>
<dbReference type="EC" id="2.5.1.147"/>
<dbReference type="EMBL" id="AP006618">
    <property type="protein sequence ID" value="BAD59604.1"/>
    <property type="molecule type" value="Genomic_DNA"/>
</dbReference>
<dbReference type="RefSeq" id="WP_011211288.1">
    <property type="nucleotide sequence ID" value="NC_006361.1"/>
</dbReference>
<dbReference type="SMR" id="Q5YQD7"/>
<dbReference type="STRING" id="247156.NFA_47520"/>
<dbReference type="GeneID" id="61135351"/>
<dbReference type="KEGG" id="nfa:NFA_47520"/>
<dbReference type="eggNOG" id="COG1060">
    <property type="taxonomic scope" value="Bacteria"/>
</dbReference>
<dbReference type="HOGENOM" id="CLU_010522_1_0_11"/>
<dbReference type="OrthoDB" id="9802027at2"/>
<dbReference type="UniPathway" id="UPA00072"/>
<dbReference type="Proteomes" id="UP000006820">
    <property type="component" value="Chromosome"/>
</dbReference>
<dbReference type="GO" id="GO:0051539">
    <property type="term" value="F:4 iron, 4 sulfur cluster binding"/>
    <property type="evidence" value="ECO:0007669"/>
    <property type="project" value="UniProtKB-KW"/>
</dbReference>
<dbReference type="GO" id="GO:0141093">
    <property type="term" value="F:5-amino-6-(D-ribitylamino)uracil--L-tyrosine 4-hydroxyphenyl transferase activity"/>
    <property type="evidence" value="ECO:0007669"/>
    <property type="project" value="UniProtKB-EC"/>
</dbReference>
<dbReference type="GO" id="GO:0044689">
    <property type="term" value="F:7,8-didemethyl-8-hydroxy-5-deazariboflavin synthase activity"/>
    <property type="evidence" value="ECO:0007669"/>
    <property type="project" value="UniProtKB-EC"/>
</dbReference>
<dbReference type="GO" id="GO:0046872">
    <property type="term" value="F:metal ion binding"/>
    <property type="evidence" value="ECO:0007669"/>
    <property type="project" value="UniProtKB-KW"/>
</dbReference>
<dbReference type="CDD" id="cd01335">
    <property type="entry name" value="Radical_SAM"/>
    <property type="match status" value="2"/>
</dbReference>
<dbReference type="FunFam" id="3.20.20.70:FF:000134">
    <property type="entry name" value="7,8-didemethyl-8-hydroxy-5-deazariboflavin synthase"/>
    <property type="match status" value="1"/>
</dbReference>
<dbReference type="Gene3D" id="3.20.20.70">
    <property type="entry name" value="Aldolase class I"/>
    <property type="match status" value="2"/>
</dbReference>
<dbReference type="HAMAP" id="MF_01611">
    <property type="entry name" value="FO_synth_sub1"/>
    <property type="match status" value="1"/>
</dbReference>
<dbReference type="HAMAP" id="MF_01612">
    <property type="entry name" value="FO_synth_sub2"/>
    <property type="match status" value="1"/>
</dbReference>
<dbReference type="InterPro" id="IPR013785">
    <property type="entry name" value="Aldolase_TIM"/>
</dbReference>
<dbReference type="InterPro" id="IPR019939">
    <property type="entry name" value="CofG_family"/>
</dbReference>
<dbReference type="InterPro" id="IPR045567">
    <property type="entry name" value="CofH/MnqC-like_C"/>
</dbReference>
<dbReference type="InterPro" id="IPR019940">
    <property type="entry name" value="CofH_family"/>
</dbReference>
<dbReference type="InterPro" id="IPR006638">
    <property type="entry name" value="Elp3/MiaA/NifB-like_rSAM"/>
</dbReference>
<dbReference type="InterPro" id="IPR034405">
    <property type="entry name" value="F420"/>
</dbReference>
<dbReference type="InterPro" id="IPR020050">
    <property type="entry name" value="FO_synthase_su2"/>
</dbReference>
<dbReference type="InterPro" id="IPR007197">
    <property type="entry name" value="rSAM"/>
</dbReference>
<dbReference type="NCBIfam" id="TIGR00423">
    <property type="entry name" value="CofH family radical SAM protein"/>
    <property type="match status" value="1"/>
</dbReference>
<dbReference type="NCBIfam" id="TIGR03550">
    <property type="entry name" value="F420_cofG"/>
    <property type="match status" value="1"/>
</dbReference>
<dbReference type="NCBIfam" id="TIGR03551">
    <property type="entry name" value="F420_cofH"/>
    <property type="match status" value="1"/>
</dbReference>
<dbReference type="NCBIfam" id="NF004884">
    <property type="entry name" value="PRK06245.1"/>
    <property type="match status" value="1"/>
</dbReference>
<dbReference type="NCBIfam" id="NF005609">
    <property type="entry name" value="PRK07360.1"/>
    <property type="match status" value="1"/>
</dbReference>
<dbReference type="NCBIfam" id="NF006687">
    <property type="entry name" value="PRK09234.1"/>
    <property type="match status" value="1"/>
</dbReference>
<dbReference type="PANTHER" id="PTHR43076">
    <property type="entry name" value="FO SYNTHASE (COFH)"/>
    <property type="match status" value="1"/>
</dbReference>
<dbReference type="PANTHER" id="PTHR43076:SF1">
    <property type="entry name" value="LIPOYL SYNTHASE 2"/>
    <property type="match status" value="1"/>
</dbReference>
<dbReference type="Pfam" id="PF19288">
    <property type="entry name" value="CofH_C"/>
    <property type="match status" value="1"/>
</dbReference>
<dbReference type="Pfam" id="PF04055">
    <property type="entry name" value="Radical_SAM"/>
    <property type="match status" value="2"/>
</dbReference>
<dbReference type="SFLD" id="SFLDF00293">
    <property type="entry name" value="((2_3_4_5-tetrahydroxypentyl)a"/>
    <property type="match status" value="1"/>
</dbReference>
<dbReference type="SFLD" id="SFLDF00294">
    <property type="entry name" value="7_8-didemethyl-8-hydroxy-5-dea"/>
    <property type="match status" value="1"/>
</dbReference>
<dbReference type="SFLD" id="SFLDF00343">
    <property type="entry name" value="aminofutalosine_synthase_(mqnE"/>
    <property type="match status" value="1"/>
</dbReference>
<dbReference type="SFLD" id="SFLDG01064">
    <property type="entry name" value="F420__menaquinone_cofactor_bio"/>
    <property type="match status" value="1"/>
</dbReference>
<dbReference type="SFLD" id="SFLDS00029">
    <property type="entry name" value="Radical_SAM"/>
    <property type="match status" value="2"/>
</dbReference>
<dbReference type="SMART" id="SM00729">
    <property type="entry name" value="Elp3"/>
    <property type="match status" value="1"/>
</dbReference>
<dbReference type="SUPFAM" id="SSF102114">
    <property type="entry name" value="Radical SAM enzymes"/>
    <property type="match status" value="2"/>
</dbReference>
<dbReference type="PROSITE" id="PS51918">
    <property type="entry name" value="RADICAL_SAM"/>
    <property type="match status" value="2"/>
</dbReference>
<reference key="1">
    <citation type="journal article" date="2004" name="Proc. Natl. Acad. Sci. U.S.A.">
        <title>The complete genomic sequence of Nocardia farcinica IFM 10152.</title>
        <authorList>
            <person name="Ishikawa J."/>
            <person name="Yamashita A."/>
            <person name="Mikami Y."/>
            <person name="Hoshino Y."/>
            <person name="Kurita H."/>
            <person name="Hotta K."/>
            <person name="Shiba T."/>
            <person name="Hattori M."/>
        </authorList>
    </citation>
    <scope>NUCLEOTIDE SEQUENCE [LARGE SCALE GENOMIC DNA]</scope>
    <source>
        <strain>IFM 10152</strain>
    </source>
</reference>
<evidence type="ECO:0000250" key="1"/>
<evidence type="ECO:0000255" key="2">
    <source>
        <dbReference type="PROSITE-ProRule" id="PRU01266"/>
    </source>
</evidence>
<evidence type="ECO:0000256" key="3">
    <source>
        <dbReference type="SAM" id="MobiDB-lite"/>
    </source>
</evidence>
<evidence type="ECO:0000305" key="4"/>
<keyword id="KW-0004">4Fe-4S</keyword>
<keyword id="KW-0408">Iron</keyword>
<keyword id="KW-0411">Iron-sulfur</keyword>
<keyword id="KW-0456">Lyase</keyword>
<keyword id="KW-0479">Metal-binding</keyword>
<keyword id="KW-1185">Reference proteome</keyword>
<keyword id="KW-0949">S-adenosyl-L-methionine</keyword>
<keyword id="KW-0808">Transferase</keyword>
<comment type="function">
    <text>Catalyzes the radical-mediated synthesis of 7,8-didemethyl-8-hydroxy-5-deazariboflavin (FO) from 5-amino-6-(D-ribitylamino)uracil and L-tyrosine.</text>
</comment>
<comment type="catalytic activity">
    <reaction>
        <text>5-amino-6-(D-ribitylamino)uracil + L-tyrosine + S-adenosyl-L-methionine = 5-amino-5-(4-hydroxybenzyl)-6-(D-ribitylimino)-5,6-dihydrouracil + 2-iminoacetate + 5'-deoxyadenosine + L-methionine + H(+)</text>
        <dbReference type="Rhea" id="RHEA:55200"/>
        <dbReference type="ChEBI" id="CHEBI:15378"/>
        <dbReference type="ChEBI" id="CHEBI:15934"/>
        <dbReference type="ChEBI" id="CHEBI:17319"/>
        <dbReference type="ChEBI" id="CHEBI:57844"/>
        <dbReference type="ChEBI" id="CHEBI:58315"/>
        <dbReference type="ChEBI" id="CHEBI:59789"/>
        <dbReference type="ChEBI" id="CHEBI:77846"/>
        <dbReference type="ChEBI" id="CHEBI:85936"/>
        <dbReference type="EC" id="2.5.1.147"/>
    </reaction>
</comment>
<comment type="catalytic activity">
    <reaction>
        <text>5-amino-5-(4-hydroxybenzyl)-6-(D-ribitylimino)-5,6-dihydrouracil + S-adenosyl-L-methionine = 7,8-didemethyl-8-hydroxy-5-deazariboflavin + 5'-deoxyadenosine + L-methionine + NH4(+) + H(+)</text>
        <dbReference type="Rhea" id="RHEA:55204"/>
        <dbReference type="ChEBI" id="CHEBI:15378"/>
        <dbReference type="ChEBI" id="CHEBI:17319"/>
        <dbReference type="ChEBI" id="CHEBI:28938"/>
        <dbReference type="ChEBI" id="CHEBI:57844"/>
        <dbReference type="ChEBI" id="CHEBI:59789"/>
        <dbReference type="ChEBI" id="CHEBI:59904"/>
        <dbReference type="ChEBI" id="CHEBI:85936"/>
        <dbReference type="EC" id="4.3.1.32"/>
    </reaction>
</comment>
<comment type="cofactor">
    <cofactor evidence="1">
        <name>[4Fe-4S] cluster</name>
        <dbReference type="ChEBI" id="CHEBI:49883"/>
    </cofactor>
    <text evidence="1">Binds 2 [4Fe-4S] clusters. The clusters are coordinated with 3 cysteines and an exchangeable S-adenosyl-L-methionine.</text>
</comment>
<comment type="pathway">
    <text>Cofactor biosynthesis; coenzyme F0 biosynthesis.</text>
</comment>
<comment type="similarity">
    <text evidence="4">In the N-terminal section; belongs to the radical SAM superfamily. CofG family.</text>
</comment>
<comment type="similarity">
    <text evidence="4">In the C-terminal section; belongs to the radical SAM superfamily. CofH family.</text>
</comment>
<organism>
    <name type="scientific">Nocardia farcinica (strain IFM 10152)</name>
    <dbReference type="NCBI Taxonomy" id="247156"/>
    <lineage>
        <taxon>Bacteria</taxon>
        <taxon>Bacillati</taxon>
        <taxon>Actinomycetota</taxon>
        <taxon>Actinomycetes</taxon>
        <taxon>Mycobacteriales</taxon>
        <taxon>Nocardiaceae</taxon>
        <taxon>Nocardia</taxon>
    </lineage>
</organism>
<name>FBIC_NOCFA</name>
<accession>Q5YQD7</accession>
<sequence length="865" mass="93767">MIEGVTELATPNVPPAPPSPSAMRRALRRARDGVSLNLDEAVVLLHARGDDLADLCRSAARVRDAGLESAGRPGTITYSRNVFIPLTRLCRDRCHYCTFVTVPGKLRAEGKGMFLEPDEVLDIARRGAALGCKEALFTLGDRPEDRWPEAAQWLDERGYDSTLDYLRAVSILVLEETGLLPHLNPGVMSWAEIARLKPVAQSMGMMLETTATRLFTEKGQCHHGSPDKDPAVRLRAITDAGRLSVPYTTGILVGIGETLTERAESIMAIRKQHKAFGHIQEVIVQNFRAKDDTAMRDAPDAGFDEFRATIAVTRLLLGPDVPVQAPPNLVSQQECLALIEAGIDDWGGVSPVTPDHVNPERPWPNLDTLRELTEASGFTLVERTSAHPKYVRAGNPWIDPRIGAHVAALTDPVTGLAKADALPVGLPWQEPDESWESAGRTDLNIAIDTEGRNTEARSDAALGQDVVGAFGDWDTIREQVRDLAVNAPERLDSDVLAALRAAERDPAGLSDDQYLALATADGAELDAVAALADQLRRDTVGDDVTYVVNRNINFTNICYTGCRFCAFAQRKGDADAFTLSTEEVADRAWEAYVDGATEVCMQGGIDPDLPVTGYADLVRAVKRRVPSMHVHAFSPMEIVNGASRGGESIADWLTALKEAGLDTIPGTAAEILDDEVRWVLTKGKLPSSAWIEVITTAHRVGLRSSSTMMYGHVDNPSHWVGHLRVLRGIQDETGGFTEFVLLPFVHQSAPLYLAGAARPGPTIRDNRAAHALARIMLHGRIDNIQTSWVKLGIAGTRVMLQGGANDLGGTLMEETISRMAGSQHGSAKTVAELAEIAEGIGRPVRERTTVYGRVDRRPAPIVPVG</sequence>
<feature type="chain" id="PRO_0000147773" description="FO synthase">
    <location>
        <begin position="1"/>
        <end position="865"/>
    </location>
</feature>
<feature type="domain" description="Radical SAM core 1" evidence="2">
    <location>
        <begin position="76"/>
        <end position="320"/>
    </location>
</feature>
<feature type="domain" description="Radical SAM core 2" evidence="2">
    <location>
        <begin position="544"/>
        <end position="785"/>
    </location>
</feature>
<feature type="region of interest" description="Disordered" evidence="3">
    <location>
        <begin position="1"/>
        <end position="21"/>
    </location>
</feature>
<feature type="region of interest" description="CofG-like">
    <location>
        <begin position="77"/>
        <end position="409"/>
    </location>
</feature>
<feature type="region of interest" description="CofH-like">
    <location>
        <begin position="521"/>
        <end position="854"/>
    </location>
</feature>
<feature type="binding site" evidence="1">
    <location>
        <position position="90"/>
    </location>
    <ligand>
        <name>[4Fe-4S] cluster</name>
        <dbReference type="ChEBI" id="CHEBI:49883"/>
        <label>1</label>
        <note>4Fe-4S-S-AdoMet</note>
    </ligand>
</feature>
<feature type="binding site" evidence="1">
    <location>
        <position position="94"/>
    </location>
    <ligand>
        <name>[4Fe-4S] cluster</name>
        <dbReference type="ChEBI" id="CHEBI:49883"/>
        <label>1</label>
        <note>4Fe-4S-S-AdoMet</note>
    </ligand>
</feature>
<feature type="binding site" evidence="1">
    <location>
        <position position="97"/>
    </location>
    <ligand>
        <name>[4Fe-4S] cluster</name>
        <dbReference type="ChEBI" id="CHEBI:49883"/>
        <label>1</label>
        <note>4Fe-4S-S-AdoMet</note>
    </ligand>
</feature>
<feature type="binding site" evidence="1">
    <location>
        <position position="558"/>
    </location>
    <ligand>
        <name>[4Fe-4S] cluster</name>
        <dbReference type="ChEBI" id="CHEBI:49883"/>
        <label>2</label>
        <note>4Fe-4S-S-AdoMet</note>
    </ligand>
</feature>
<feature type="binding site" evidence="1">
    <location>
        <position position="562"/>
    </location>
    <ligand>
        <name>[4Fe-4S] cluster</name>
        <dbReference type="ChEBI" id="CHEBI:49883"/>
        <label>2</label>
        <note>4Fe-4S-S-AdoMet</note>
    </ligand>
</feature>
<feature type="binding site" evidence="1">
    <location>
        <position position="565"/>
    </location>
    <ligand>
        <name>[4Fe-4S] cluster</name>
        <dbReference type="ChEBI" id="CHEBI:49883"/>
        <label>2</label>
        <note>4Fe-4S-S-AdoMet</note>
    </ligand>
</feature>
<proteinExistence type="inferred from homology"/>